<evidence type="ECO:0000255" key="1">
    <source>
        <dbReference type="HAMAP-Rule" id="MF_01080"/>
    </source>
</evidence>
<sequence>MLHTTPSGLLIIDKPQGVTSFDAVAAVRGALHIKKVGHAGTLDPMATGTLVIAFGHATRLLNAIVAHDKTYEATIRLGLRTTTDDAEGEVLVDDEARSRWQTLSAQLTEGGQSGEPTALPTASWQDLLTRTIATNFTGDIEQVPNTFSAIKINGQRAYDLAREGKEVELKPRPVTISEFTVLNIRSGFVAGEQAAEPLREDANTGAIPALDVDVRVSCSSGTYIRALARDLGNELGVGGYLTRLRRTRVGRFALPDDASGLIAPEAMLDTRTHTVTAHTDQKTFTNREGQTVTRNKCVLDTPEGLAGDERRNWLLDHALTMEQAARGAMPALDITPEEASELRFGRRIERTISEPTAAIVPQTHDVAAIIERANAHQAKPVTVFPLA</sequence>
<reference key="1">
    <citation type="journal article" date="2008" name="Proc. Natl. Acad. Sci. U.S.A.">
        <title>The genome sequence of Bifidobacterium longum subsp. infantis reveals adaptations for milk utilization within the infant microbiome.</title>
        <authorList>
            <person name="Sela D.A."/>
            <person name="Chapman J."/>
            <person name="Adeuya A."/>
            <person name="Kim J.H."/>
            <person name="Chen F."/>
            <person name="Whitehead T.R."/>
            <person name="Lapidus A."/>
            <person name="Rokhsar D.S."/>
            <person name="Lebrilla C.B."/>
            <person name="German J.B."/>
            <person name="Price N.P."/>
            <person name="Richardson P.M."/>
            <person name="Mills D.A."/>
        </authorList>
    </citation>
    <scope>NUCLEOTIDE SEQUENCE [LARGE SCALE GENOMIC DNA]</scope>
    <source>
        <strain>ATCC 15697 / DSM 20088 / JCM 1222 / NCTC 11817 / S12</strain>
    </source>
</reference>
<reference key="2">
    <citation type="journal article" date="2011" name="Nature">
        <title>Bifidobacteria can protect from enteropathogenic infection through production of acetate.</title>
        <authorList>
            <person name="Fukuda S."/>
            <person name="Toh H."/>
            <person name="Hase K."/>
            <person name="Oshima K."/>
            <person name="Nakanishi Y."/>
            <person name="Yoshimura K."/>
            <person name="Tobe T."/>
            <person name="Clarke J.M."/>
            <person name="Topping D.L."/>
            <person name="Suzuki T."/>
            <person name="Taylor T.D."/>
            <person name="Itoh K."/>
            <person name="Kikuchi J."/>
            <person name="Morita H."/>
            <person name="Hattori M."/>
            <person name="Ohno H."/>
        </authorList>
    </citation>
    <scope>NUCLEOTIDE SEQUENCE [LARGE SCALE GENOMIC DNA]</scope>
    <source>
        <strain>ATCC 15697 / DSM 20088 / JCM 1222 / NCTC 11817 / S12</strain>
    </source>
</reference>
<protein>
    <recommendedName>
        <fullName evidence="1">tRNA pseudouridine synthase B</fullName>
        <ecNumber evidence="1">5.4.99.25</ecNumber>
    </recommendedName>
    <alternativeName>
        <fullName evidence="1">tRNA pseudouridine(55) synthase</fullName>
        <shortName evidence="1">Psi55 synthase</shortName>
    </alternativeName>
    <alternativeName>
        <fullName evidence="1">tRNA pseudouridylate synthase</fullName>
    </alternativeName>
    <alternativeName>
        <fullName evidence="1">tRNA-uridine isomerase</fullName>
    </alternativeName>
</protein>
<organism>
    <name type="scientific">Bifidobacterium longum subsp. infantis (strain ATCC 15697 / DSM 20088 / JCM 1222 / NCTC 11817 / S12)</name>
    <dbReference type="NCBI Taxonomy" id="391904"/>
    <lineage>
        <taxon>Bacteria</taxon>
        <taxon>Bacillati</taxon>
        <taxon>Actinomycetota</taxon>
        <taxon>Actinomycetes</taxon>
        <taxon>Bifidobacteriales</taxon>
        <taxon>Bifidobacteriaceae</taxon>
        <taxon>Bifidobacterium</taxon>
    </lineage>
</organism>
<feature type="chain" id="PRO_1000149820" description="tRNA pseudouridine synthase B">
    <location>
        <begin position="1"/>
        <end position="387"/>
    </location>
</feature>
<feature type="active site" description="Nucleophile" evidence="1">
    <location>
        <position position="43"/>
    </location>
</feature>
<name>TRUB_BIFLS</name>
<gene>
    <name evidence="1" type="primary">truB</name>
    <name type="ordered locus">Blon_2196</name>
    <name type="ordered locus">BLIJ_2270</name>
</gene>
<accession>B7GNA1</accession>
<accession>E8MN44</accession>
<dbReference type="EC" id="5.4.99.25" evidence="1"/>
<dbReference type="EMBL" id="CP001095">
    <property type="protein sequence ID" value="ACJ53257.1"/>
    <property type="molecule type" value="Genomic_DNA"/>
</dbReference>
<dbReference type="EMBL" id="AP010889">
    <property type="protein sequence ID" value="BAJ69847.1"/>
    <property type="molecule type" value="Genomic_DNA"/>
</dbReference>
<dbReference type="RefSeq" id="WP_012578455.1">
    <property type="nucleotide sequence ID" value="NC_011593.1"/>
</dbReference>
<dbReference type="SMR" id="B7GNA1"/>
<dbReference type="KEGG" id="bln:Blon_2196"/>
<dbReference type="KEGG" id="blon:BLIJ_2270"/>
<dbReference type="PATRIC" id="fig|391904.8.peg.2271"/>
<dbReference type="HOGENOM" id="CLU_032087_0_0_11"/>
<dbReference type="Proteomes" id="UP000001360">
    <property type="component" value="Chromosome"/>
</dbReference>
<dbReference type="GO" id="GO:0003723">
    <property type="term" value="F:RNA binding"/>
    <property type="evidence" value="ECO:0007669"/>
    <property type="project" value="InterPro"/>
</dbReference>
<dbReference type="GO" id="GO:0160148">
    <property type="term" value="F:tRNA pseudouridine(55) synthase activity"/>
    <property type="evidence" value="ECO:0007669"/>
    <property type="project" value="UniProtKB-EC"/>
</dbReference>
<dbReference type="GO" id="GO:1990481">
    <property type="term" value="P:mRNA pseudouridine synthesis"/>
    <property type="evidence" value="ECO:0007669"/>
    <property type="project" value="TreeGrafter"/>
</dbReference>
<dbReference type="GO" id="GO:0031119">
    <property type="term" value="P:tRNA pseudouridine synthesis"/>
    <property type="evidence" value="ECO:0007669"/>
    <property type="project" value="UniProtKB-UniRule"/>
</dbReference>
<dbReference type="CDD" id="cd02573">
    <property type="entry name" value="PseudoU_synth_EcTruB"/>
    <property type="match status" value="1"/>
</dbReference>
<dbReference type="Gene3D" id="3.30.2350.10">
    <property type="entry name" value="Pseudouridine synthase"/>
    <property type="match status" value="1"/>
</dbReference>
<dbReference type="Gene3D" id="2.30.130.10">
    <property type="entry name" value="PUA domain"/>
    <property type="match status" value="1"/>
</dbReference>
<dbReference type="HAMAP" id="MF_01080">
    <property type="entry name" value="TruB_bact"/>
    <property type="match status" value="1"/>
</dbReference>
<dbReference type="InterPro" id="IPR020103">
    <property type="entry name" value="PsdUridine_synth_cat_dom_sf"/>
</dbReference>
<dbReference type="InterPro" id="IPR002501">
    <property type="entry name" value="PsdUridine_synth_N"/>
</dbReference>
<dbReference type="InterPro" id="IPR036974">
    <property type="entry name" value="PUA_sf"/>
</dbReference>
<dbReference type="InterPro" id="IPR015225">
    <property type="entry name" value="tRNA_psdUridine_synth_fam2_C"/>
</dbReference>
<dbReference type="InterPro" id="IPR014780">
    <property type="entry name" value="tRNA_psdUridine_synth_TruB"/>
</dbReference>
<dbReference type="InterPro" id="IPR032819">
    <property type="entry name" value="TruB_C"/>
</dbReference>
<dbReference type="PANTHER" id="PTHR13767:SF2">
    <property type="entry name" value="PSEUDOURIDYLATE SYNTHASE TRUB1"/>
    <property type="match status" value="1"/>
</dbReference>
<dbReference type="PANTHER" id="PTHR13767">
    <property type="entry name" value="TRNA-PSEUDOURIDINE SYNTHASE"/>
    <property type="match status" value="1"/>
</dbReference>
<dbReference type="Pfam" id="PF09142">
    <property type="entry name" value="TruB_C"/>
    <property type="match status" value="1"/>
</dbReference>
<dbReference type="Pfam" id="PF16198">
    <property type="entry name" value="TruB_C_2"/>
    <property type="match status" value="1"/>
</dbReference>
<dbReference type="Pfam" id="PF01509">
    <property type="entry name" value="TruB_N"/>
    <property type="match status" value="2"/>
</dbReference>
<dbReference type="SUPFAM" id="SSF55120">
    <property type="entry name" value="Pseudouridine synthase"/>
    <property type="match status" value="1"/>
</dbReference>
<comment type="function">
    <text evidence="1">Responsible for synthesis of pseudouridine from uracil-55 in the psi GC loop of transfer RNAs.</text>
</comment>
<comment type="catalytic activity">
    <reaction evidence="1">
        <text>uridine(55) in tRNA = pseudouridine(55) in tRNA</text>
        <dbReference type="Rhea" id="RHEA:42532"/>
        <dbReference type="Rhea" id="RHEA-COMP:10101"/>
        <dbReference type="Rhea" id="RHEA-COMP:10102"/>
        <dbReference type="ChEBI" id="CHEBI:65314"/>
        <dbReference type="ChEBI" id="CHEBI:65315"/>
        <dbReference type="EC" id="5.4.99.25"/>
    </reaction>
</comment>
<comment type="similarity">
    <text evidence="1">Belongs to the pseudouridine synthase TruB family. Type 1 subfamily.</text>
</comment>
<keyword id="KW-0413">Isomerase</keyword>
<keyword id="KW-0819">tRNA processing</keyword>
<proteinExistence type="inferred from homology"/>